<protein>
    <recommendedName>
        <fullName evidence="1">LexA repressor</fullName>
        <ecNumber evidence="1">3.4.21.88</ecNumber>
    </recommendedName>
</protein>
<gene>
    <name evidence="1" type="primary">lexA</name>
    <name type="ordered locus">ECIAI39_4464</name>
</gene>
<reference key="1">
    <citation type="journal article" date="2009" name="PLoS Genet.">
        <title>Organised genome dynamics in the Escherichia coli species results in highly diverse adaptive paths.</title>
        <authorList>
            <person name="Touchon M."/>
            <person name="Hoede C."/>
            <person name="Tenaillon O."/>
            <person name="Barbe V."/>
            <person name="Baeriswyl S."/>
            <person name="Bidet P."/>
            <person name="Bingen E."/>
            <person name="Bonacorsi S."/>
            <person name="Bouchier C."/>
            <person name="Bouvet O."/>
            <person name="Calteau A."/>
            <person name="Chiapello H."/>
            <person name="Clermont O."/>
            <person name="Cruveiller S."/>
            <person name="Danchin A."/>
            <person name="Diard M."/>
            <person name="Dossat C."/>
            <person name="Karoui M.E."/>
            <person name="Frapy E."/>
            <person name="Garry L."/>
            <person name="Ghigo J.M."/>
            <person name="Gilles A.M."/>
            <person name="Johnson J."/>
            <person name="Le Bouguenec C."/>
            <person name="Lescat M."/>
            <person name="Mangenot S."/>
            <person name="Martinez-Jehanne V."/>
            <person name="Matic I."/>
            <person name="Nassif X."/>
            <person name="Oztas S."/>
            <person name="Petit M.A."/>
            <person name="Pichon C."/>
            <person name="Rouy Z."/>
            <person name="Ruf C.S."/>
            <person name="Schneider D."/>
            <person name="Tourret J."/>
            <person name="Vacherie B."/>
            <person name="Vallenet D."/>
            <person name="Medigue C."/>
            <person name="Rocha E.P.C."/>
            <person name="Denamur E."/>
        </authorList>
    </citation>
    <scope>NUCLEOTIDE SEQUENCE [LARGE SCALE GENOMIC DNA]</scope>
    <source>
        <strain>IAI39 / ExPEC</strain>
    </source>
</reference>
<comment type="function">
    <text evidence="1">Represses a number of genes involved in the response to DNA damage (SOS response), including recA and lexA. Binds to the 16 bp palindromic sequence 5'-CTGTATATATATACAG-3'. In the presence of single-stranded DNA, RecA interacts with LexA causing an autocatalytic cleavage which disrupts the DNA-binding part of LexA, leading to derepression of the SOS regulon and eventually DNA repair.</text>
</comment>
<comment type="catalytic activity">
    <reaction evidence="1">
        <text>Hydrolysis of Ala-|-Gly bond in repressor LexA.</text>
        <dbReference type="EC" id="3.4.21.88"/>
    </reaction>
</comment>
<comment type="subunit">
    <text evidence="1">Homodimer.</text>
</comment>
<comment type="similarity">
    <text evidence="1">Belongs to the peptidase S24 family.</text>
</comment>
<evidence type="ECO:0000255" key="1">
    <source>
        <dbReference type="HAMAP-Rule" id="MF_00015"/>
    </source>
</evidence>
<name>LEXA_ECO7I</name>
<dbReference type="EC" id="3.4.21.88" evidence="1"/>
<dbReference type="EMBL" id="CU928164">
    <property type="protein sequence ID" value="CAR20570.1"/>
    <property type="molecule type" value="Genomic_DNA"/>
</dbReference>
<dbReference type="RefSeq" id="WP_000646078.1">
    <property type="nucleotide sequence ID" value="NC_011750.1"/>
</dbReference>
<dbReference type="RefSeq" id="YP_002410337.1">
    <property type="nucleotide sequence ID" value="NC_011750.1"/>
</dbReference>
<dbReference type="SMR" id="B7NSK5"/>
<dbReference type="STRING" id="585057.ECIAI39_4464"/>
<dbReference type="MEROPS" id="S24.001"/>
<dbReference type="GeneID" id="93777788"/>
<dbReference type="KEGG" id="ect:ECIAI39_4464"/>
<dbReference type="PATRIC" id="fig|585057.6.peg.4610"/>
<dbReference type="HOGENOM" id="CLU_066192_45_3_6"/>
<dbReference type="Proteomes" id="UP000000749">
    <property type="component" value="Chromosome"/>
</dbReference>
<dbReference type="GO" id="GO:0003677">
    <property type="term" value="F:DNA binding"/>
    <property type="evidence" value="ECO:0007669"/>
    <property type="project" value="UniProtKB-UniRule"/>
</dbReference>
<dbReference type="GO" id="GO:0004252">
    <property type="term" value="F:serine-type endopeptidase activity"/>
    <property type="evidence" value="ECO:0007669"/>
    <property type="project" value="UniProtKB-UniRule"/>
</dbReference>
<dbReference type="GO" id="GO:0006281">
    <property type="term" value="P:DNA repair"/>
    <property type="evidence" value="ECO:0007669"/>
    <property type="project" value="UniProtKB-UniRule"/>
</dbReference>
<dbReference type="GO" id="GO:0006260">
    <property type="term" value="P:DNA replication"/>
    <property type="evidence" value="ECO:0007669"/>
    <property type="project" value="UniProtKB-UniRule"/>
</dbReference>
<dbReference type="GO" id="GO:0045892">
    <property type="term" value="P:negative regulation of DNA-templated transcription"/>
    <property type="evidence" value="ECO:0007669"/>
    <property type="project" value="UniProtKB-UniRule"/>
</dbReference>
<dbReference type="GO" id="GO:0006508">
    <property type="term" value="P:proteolysis"/>
    <property type="evidence" value="ECO:0007669"/>
    <property type="project" value="InterPro"/>
</dbReference>
<dbReference type="GO" id="GO:0009432">
    <property type="term" value="P:SOS response"/>
    <property type="evidence" value="ECO:0007669"/>
    <property type="project" value="UniProtKB-UniRule"/>
</dbReference>
<dbReference type="CDD" id="cd06529">
    <property type="entry name" value="S24_LexA-like"/>
    <property type="match status" value="1"/>
</dbReference>
<dbReference type="FunFam" id="1.10.10.10:FF:000009">
    <property type="entry name" value="LexA repressor"/>
    <property type="match status" value="1"/>
</dbReference>
<dbReference type="FunFam" id="2.10.109.10:FF:000001">
    <property type="entry name" value="LexA repressor"/>
    <property type="match status" value="1"/>
</dbReference>
<dbReference type="Gene3D" id="2.10.109.10">
    <property type="entry name" value="Umud Fragment, subunit A"/>
    <property type="match status" value="1"/>
</dbReference>
<dbReference type="Gene3D" id="1.10.10.10">
    <property type="entry name" value="Winged helix-like DNA-binding domain superfamily/Winged helix DNA-binding domain"/>
    <property type="match status" value="1"/>
</dbReference>
<dbReference type="HAMAP" id="MF_00015">
    <property type="entry name" value="LexA"/>
    <property type="match status" value="1"/>
</dbReference>
<dbReference type="InterPro" id="IPR006200">
    <property type="entry name" value="LexA"/>
</dbReference>
<dbReference type="InterPro" id="IPR039418">
    <property type="entry name" value="LexA-like"/>
</dbReference>
<dbReference type="InterPro" id="IPR036286">
    <property type="entry name" value="LexA/Signal_pep-like_sf"/>
</dbReference>
<dbReference type="InterPro" id="IPR006199">
    <property type="entry name" value="LexA_DNA-bd_dom"/>
</dbReference>
<dbReference type="InterPro" id="IPR050077">
    <property type="entry name" value="LexA_repressor"/>
</dbReference>
<dbReference type="InterPro" id="IPR006197">
    <property type="entry name" value="Peptidase_S24_LexA"/>
</dbReference>
<dbReference type="InterPro" id="IPR015927">
    <property type="entry name" value="Peptidase_S24_S26A/B/C"/>
</dbReference>
<dbReference type="InterPro" id="IPR036388">
    <property type="entry name" value="WH-like_DNA-bd_sf"/>
</dbReference>
<dbReference type="InterPro" id="IPR036390">
    <property type="entry name" value="WH_DNA-bd_sf"/>
</dbReference>
<dbReference type="NCBIfam" id="TIGR00498">
    <property type="entry name" value="lexA"/>
    <property type="match status" value="1"/>
</dbReference>
<dbReference type="PANTHER" id="PTHR33516">
    <property type="entry name" value="LEXA REPRESSOR"/>
    <property type="match status" value="1"/>
</dbReference>
<dbReference type="PANTHER" id="PTHR33516:SF2">
    <property type="entry name" value="LEXA REPRESSOR-RELATED"/>
    <property type="match status" value="1"/>
</dbReference>
<dbReference type="Pfam" id="PF01726">
    <property type="entry name" value="LexA_DNA_bind"/>
    <property type="match status" value="1"/>
</dbReference>
<dbReference type="Pfam" id="PF00717">
    <property type="entry name" value="Peptidase_S24"/>
    <property type="match status" value="1"/>
</dbReference>
<dbReference type="PRINTS" id="PR00726">
    <property type="entry name" value="LEXASERPTASE"/>
</dbReference>
<dbReference type="SUPFAM" id="SSF51306">
    <property type="entry name" value="LexA/Signal peptidase"/>
    <property type="match status" value="1"/>
</dbReference>
<dbReference type="SUPFAM" id="SSF46785">
    <property type="entry name" value="Winged helix' DNA-binding domain"/>
    <property type="match status" value="1"/>
</dbReference>
<organism>
    <name type="scientific">Escherichia coli O7:K1 (strain IAI39 / ExPEC)</name>
    <dbReference type="NCBI Taxonomy" id="585057"/>
    <lineage>
        <taxon>Bacteria</taxon>
        <taxon>Pseudomonadati</taxon>
        <taxon>Pseudomonadota</taxon>
        <taxon>Gammaproteobacteria</taxon>
        <taxon>Enterobacterales</taxon>
        <taxon>Enterobacteriaceae</taxon>
        <taxon>Escherichia</taxon>
    </lineage>
</organism>
<keyword id="KW-0068">Autocatalytic cleavage</keyword>
<keyword id="KW-0227">DNA damage</keyword>
<keyword id="KW-0234">DNA repair</keyword>
<keyword id="KW-0235">DNA replication</keyword>
<keyword id="KW-0238">DNA-binding</keyword>
<keyword id="KW-0378">Hydrolase</keyword>
<keyword id="KW-0678">Repressor</keyword>
<keyword id="KW-0742">SOS response</keyword>
<keyword id="KW-0804">Transcription</keyword>
<keyword id="KW-0805">Transcription regulation</keyword>
<sequence length="202" mass="22358">MKALTARQQEVFDLIRDHISQTGMPPTRAEIAQRLGFRSPNAAEEHLKALARKGVIEIVSGASRGIRLLQEEEEGLPLVGRVAAGEPLLAQQHIEGHYQVDPSLFKPNADFLLRVSGMSMKDIGIMDGDLLAVHKTQDVRNGQVVVARIDDEVTVKRLKKQGNKVELLPENSEFKPIVVDLRQQSFTIEGLAVGVIRNGDWL</sequence>
<feature type="chain" id="PRO_1000192768" description="LexA repressor">
    <location>
        <begin position="1"/>
        <end position="202"/>
    </location>
</feature>
<feature type="DNA-binding region" description="H-T-H motif" evidence="1">
    <location>
        <begin position="28"/>
        <end position="48"/>
    </location>
</feature>
<feature type="active site" description="For autocatalytic cleavage activity" evidence="1">
    <location>
        <position position="119"/>
    </location>
</feature>
<feature type="active site" description="For autocatalytic cleavage activity" evidence="1">
    <location>
        <position position="156"/>
    </location>
</feature>
<feature type="site" description="Cleavage; by autolysis" evidence="1">
    <location>
        <begin position="84"/>
        <end position="85"/>
    </location>
</feature>
<accession>B7NSK5</accession>
<proteinExistence type="inferred from homology"/>